<proteinExistence type="inferred from homology"/>
<comment type="catalytic activity">
    <reaction evidence="1">
        <text>tRNA(His) + L-histidine + ATP = L-histidyl-tRNA(His) + AMP + diphosphate + H(+)</text>
        <dbReference type="Rhea" id="RHEA:17313"/>
        <dbReference type="Rhea" id="RHEA-COMP:9665"/>
        <dbReference type="Rhea" id="RHEA-COMP:9689"/>
        <dbReference type="ChEBI" id="CHEBI:15378"/>
        <dbReference type="ChEBI" id="CHEBI:30616"/>
        <dbReference type="ChEBI" id="CHEBI:33019"/>
        <dbReference type="ChEBI" id="CHEBI:57595"/>
        <dbReference type="ChEBI" id="CHEBI:78442"/>
        <dbReference type="ChEBI" id="CHEBI:78527"/>
        <dbReference type="ChEBI" id="CHEBI:456215"/>
        <dbReference type="EC" id="6.1.1.21"/>
    </reaction>
</comment>
<comment type="subunit">
    <text evidence="1">Homodimer.</text>
</comment>
<comment type="subcellular location">
    <subcellularLocation>
        <location evidence="1">Cytoplasm</location>
    </subcellularLocation>
</comment>
<comment type="similarity">
    <text evidence="1">Belongs to the class-II aminoacyl-tRNA synthetase family.</text>
</comment>
<name>SYH_CORK4</name>
<accession>C4LIW5</accession>
<keyword id="KW-0030">Aminoacyl-tRNA synthetase</keyword>
<keyword id="KW-0067">ATP-binding</keyword>
<keyword id="KW-0963">Cytoplasm</keyword>
<keyword id="KW-0436">Ligase</keyword>
<keyword id="KW-0547">Nucleotide-binding</keyword>
<keyword id="KW-0648">Protein biosynthesis</keyword>
<keyword id="KW-1185">Reference proteome</keyword>
<dbReference type="EC" id="6.1.1.21" evidence="1"/>
<dbReference type="EMBL" id="CP001620">
    <property type="protein sequence ID" value="ACR17770.1"/>
    <property type="molecule type" value="Genomic_DNA"/>
</dbReference>
<dbReference type="RefSeq" id="WP_012731657.1">
    <property type="nucleotide sequence ID" value="NC_012704.1"/>
</dbReference>
<dbReference type="SMR" id="C4LIW5"/>
<dbReference type="STRING" id="645127.ckrop_1017"/>
<dbReference type="KEGG" id="ckp:ckrop_1017"/>
<dbReference type="eggNOG" id="COG0124">
    <property type="taxonomic scope" value="Bacteria"/>
</dbReference>
<dbReference type="HOGENOM" id="CLU_025113_1_1_11"/>
<dbReference type="OrthoDB" id="9800814at2"/>
<dbReference type="Proteomes" id="UP000001473">
    <property type="component" value="Chromosome"/>
</dbReference>
<dbReference type="GO" id="GO:0005737">
    <property type="term" value="C:cytoplasm"/>
    <property type="evidence" value="ECO:0007669"/>
    <property type="project" value="UniProtKB-SubCell"/>
</dbReference>
<dbReference type="GO" id="GO:0005524">
    <property type="term" value="F:ATP binding"/>
    <property type="evidence" value="ECO:0007669"/>
    <property type="project" value="UniProtKB-UniRule"/>
</dbReference>
<dbReference type="GO" id="GO:0004821">
    <property type="term" value="F:histidine-tRNA ligase activity"/>
    <property type="evidence" value="ECO:0007669"/>
    <property type="project" value="UniProtKB-UniRule"/>
</dbReference>
<dbReference type="GO" id="GO:0006427">
    <property type="term" value="P:histidyl-tRNA aminoacylation"/>
    <property type="evidence" value="ECO:0007669"/>
    <property type="project" value="UniProtKB-UniRule"/>
</dbReference>
<dbReference type="CDD" id="cd00773">
    <property type="entry name" value="HisRS-like_core"/>
    <property type="match status" value="1"/>
</dbReference>
<dbReference type="CDD" id="cd00859">
    <property type="entry name" value="HisRS_anticodon"/>
    <property type="match status" value="1"/>
</dbReference>
<dbReference type="FunFam" id="3.30.930.10:FF:000005">
    <property type="entry name" value="Histidine--tRNA ligase"/>
    <property type="match status" value="1"/>
</dbReference>
<dbReference type="Gene3D" id="3.40.50.800">
    <property type="entry name" value="Anticodon-binding domain"/>
    <property type="match status" value="1"/>
</dbReference>
<dbReference type="Gene3D" id="3.30.930.10">
    <property type="entry name" value="Bira Bifunctional Protein, Domain 2"/>
    <property type="match status" value="1"/>
</dbReference>
<dbReference type="HAMAP" id="MF_00127">
    <property type="entry name" value="His_tRNA_synth"/>
    <property type="match status" value="1"/>
</dbReference>
<dbReference type="InterPro" id="IPR006195">
    <property type="entry name" value="aa-tRNA-synth_II"/>
</dbReference>
<dbReference type="InterPro" id="IPR045864">
    <property type="entry name" value="aa-tRNA-synth_II/BPL/LPL"/>
</dbReference>
<dbReference type="InterPro" id="IPR004154">
    <property type="entry name" value="Anticodon-bd"/>
</dbReference>
<dbReference type="InterPro" id="IPR036621">
    <property type="entry name" value="Anticodon-bd_dom_sf"/>
</dbReference>
<dbReference type="InterPro" id="IPR015807">
    <property type="entry name" value="His-tRNA-ligase"/>
</dbReference>
<dbReference type="InterPro" id="IPR041715">
    <property type="entry name" value="HisRS-like_core"/>
</dbReference>
<dbReference type="InterPro" id="IPR004516">
    <property type="entry name" value="HisRS/HisZ"/>
</dbReference>
<dbReference type="InterPro" id="IPR033656">
    <property type="entry name" value="HisRS_anticodon"/>
</dbReference>
<dbReference type="NCBIfam" id="TIGR00442">
    <property type="entry name" value="hisS"/>
    <property type="match status" value="1"/>
</dbReference>
<dbReference type="PANTHER" id="PTHR43707:SF1">
    <property type="entry name" value="HISTIDINE--TRNA LIGASE, MITOCHONDRIAL-RELATED"/>
    <property type="match status" value="1"/>
</dbReference>
<dbReference type="PANTHER" id="PTHR43707">
    <property type="entry name" value="HISTIDYL-TRNA SYNTHETASE"/>
    <property type="match status" value="1"/>
</dbReference>
<dbReference type="Pfam" id="PF03129">
    <property type="entry name" value="HGTP_anticodon"/>
    <property type="match status" value="1"/>
</dbReference>
<dbReference type="Pfam" id="PF13393">
    <property type="entry name" value="tRNA-synt_His"/>
    <property type="match status" value="1"/>
</dbReference>
<dbReference type="PIRSF" id="PIRSF001549">
    <property type="entry name" value="His-tRNA_synth"/>
    <property type="match status" value="1"/>
</dbReference>
<dbReference type="SUPFAM" id="SSF52954">
    <property type="entry name" value="Class II aaRS ABD-related"/>
    <property type="match status" value="1"/>
</dbReference>
<dbReference type="SUPFAM" id="SSF55681">
    <property type="entry name" value="Class II aaRS and biotin synthetases"/>
    <property type="match status" value="1"/>
</dbReference>
<dbReference type="PROSITE" id="PS50862">
    <property type="entry name" value="AA_TRNA_LIGASE_II"/>
    <property type="match status" value="1"/>
</dbReference>
<sequence>MSTSSKPRKFTAPKGVPDYVPPNSHEFNAVRSTFHHCATVAGYEPVELPIFEDTSLFARGVGESSDVVTKEMYTFEDRGGRSMTLRPEGTAGVMRAVIEHGLDRGQLPAKLVYAGPCFRYERPQAGRYRQFQQVGVEAIGVDDPALDAEVIALAYRCFTSLGLMGFRLELTSLGDSTCRPAYREKLQAFLTSLPLDEETQHRAQINPLRVLDDKRPEVKEMTADAPLMLDYLSDEARAHFETVTGILDDLSVPYTINPRMVRGLDYYTKTCFEFVHDDLGAQSGIGGGGRYDGLMAELGGRDLSGVGFGLGVERALLALETEKKTVTDGSRVEVYGVAMGEEAHRRMPVIINDLRQSGVRADMSYGHRGLKGSMKAADRAGARFALVIGEDELAKSIVQVKDLHEGEQTAVPLDQVVQEVRGRLSA</sequence>
<organism>
    <name type="scientific">Corynebacterium kroppenstedtii (strain DSM 44385 / JCM 11950 / CIP 105744 / CCUG 35717)</name>
    <dbReference type="NCBI Taxonomy" id="645127"/>
    <lineage>
        <taxon>Bacteria</taxon>
        <taxon>Bacillati</taxon>
        <taxon>Actinomycetota</taxon>
        <taxon>Actinomycetes</taxon>
        <taxon>Mycobacteriales</taxon>
        <taxon>Corynebacteriaceae</taxon>
        <taxon>Corynebacterium</taxon>
    </lineage>
</organism>
<reference key="1">
    <citation type="journal article" date="2008" name="J. Biotechnol.">
        <title>Ultrafast pyrosequencing of Corynebacterium kroppenstedtii DSM44385 revealed insights into the physiology of a lipophilic corynebacterium that lacks mycolic acids.</title>
        <authorList>
            <person name="Tauch A."/>
            <person name="Schneider J."/>
            <person name="Szczepanowski R."/>
            <person name="Tilker A."/>
            <person name="Viehoever P."/>
            <person name="Gartemann K.-H."/>
            <person name="Arnold W."/>
            <person name="Blom J."/>
            <person name="Brinkrolf K."/>
            <person name="Brune I."/>
            <person name="Goetker S."/>
            <person name="Weisshaar B."/>
            <person name="Goesmann A."/>
            <person name="Droege M."/>
            <person name="Puehler A."/>
        </authorList>
    </citation>
    <scope>NUCLEOTIDE SEQUENCE [LARGE SCALE GENOMIC DNA]</scope>
    <source>
        <strain>DSM 44385 / JCM 11950 / CIP 105744 / CCUG 35717</strain>
    </source>
</reference>
<feature type="chain" id="PRO_1000203129" description="Histidine--tRNA ligase">
    <location>
        <begin position="1"/>
        <end position="426"/>
    </location>
</feature>
<evidence type="ECO:0000255" key="1">
    <source>
        <dbReference type="HAMAP-Rule" id="MF_00127"/>
    </source>
</evidence>
<protein>
    <recommendedName>
        <fullName evidence="1">Histidine--tRNA ligase</fullName>
        <ecNumber evidence="1">6.1.1.21</ecNumber>
    </recommendedName>
    <alternativeName>
        <fullName evidence="1">Histidyl-tRNA synthetase</fullName>
        <shortName evidence="1">HisRS</shortName>
    </alternativeName>
</protein>
<gene>
    <name evidence="1" type="primary">hisS</name>
    <name type="ordered locus">ckrop_1017</name>
</gene>